<gene>
    <name evidence="1" type="primary">NP</name>
</gene>
<organism>
    <name type="scientific">Influenza A virus (strain A/Gull/Astrakhan/227/1984 H13N6)</name>
    <dbReference type="NCBI Taxonomy" id="385603"/>
    <lineage>
        <taxon>Viruses</taxon>
        <taxon>Riboviria</taxon>
        <taxon>Orthornavirae</taxon>
        <taxon>Negarnaviricota</taxon>
        <taxon>Polyploviricotina</taxon>
        <taxon>Insthoviricetes</taxon>
        <taxon>Articulavirales</taxon>
        <taxon>Orthomyxoviridae</taxon>
        <taxon>Alphainfluenzavirus</taxon>
        <taxon>Alphainfluenzavirus influenzae</taxon>
        <taxon>Influenza A virus</taxon>
    </lineage>
</organism>
<name>NCAP_I84A4</name>
<dbReference type="EMBL" id="M30753">
    <property type="protein sequence ID" value="AAA43461.1"/>
    <property type="molecule type" value="Genomic_RNA"/>
</dbReference>
<dbReference type="SMR" id="P15668"/>
<dbReference type="GO" id="GO:0019029">
    <property type="term" value="C:helical viral capsid"/>
    <property type="evidence" value="ECO:0007669"/>
    <property type="project" value="UniProtKB-UniRule"/>
</dbReference>
<dbReference type="GO" id="GO:0043657">
    <property type="term" value="C:host cell"/>
    <property type="evidence" value="ECO:0007669"/>
    <property type="project" value="GOC"/>
</dbReference>
<dbReference type="GO" id="GO:0042025">
    <property type="term" value="C:host cell nucleus"/>
    <property type="evidence" value="ECO:0007669"/>
    <property type="project" value="UniProtKB-SubCell"/>
</dbReference>
<dbReference type="GO" id="GO:1990904">
    <property type="term" value="C:ribonucleoprotein complex"/>
    <property type="evidence" value="ECO:0007669"/>
    <property type="project" value="UniProtKB-KW"/>
</dbReference>
<dbReference type="GO" id="GO:0019013">
    <property type="term" value="C:viral nucleocapsid"/>
    <property type="evidence" value="ECO:0007669"/>
    <property type="project" value="UniProtKB-UniRule"/>
</dbReference>
<dbReference type="GO" id="GO:0003723">
    <property type="term" value="F:RNA binding"/>
    <property type="evidence" value="ECO:0007669"/>
    <property type="project" value="UniProtKB-UniRule"/>
</dbReference>
<dbReference type="GO" id="GO:0005198">
    <property type="term" value="F:structural molecule activity"/>
    <property type="evidence" value="ECO:0007669"/>
    <property type="project" value="UniProtKB-UniRule"/>
</dbReference>
<dbReference type="GO" id="GO:0046718">
    <property type="term" value="P:symbiont entry into host cell"/>
    <property type="evidence" value="ECO:0007669"/>
    <property type="project" value="UniProtKB-KW"/>
</dbReference>
<dbReference type="GO" id="GO:0075732">
    <property type="term" value="P:viral penetration into host nucleus"/>
    <property type="evidence" value="ECO:0007669"/>
    <property type="project" value="UniProtKB-UniRule"/>
</dbReference>
<dbReference type="HAMAP" id="MF_04070">
    <property type="entry name" value="INFV_NCAP"/>
    <property type="match status" value="1"/>
</dbReference>
<dbReference type="InterPro" id="IPR002141">
    <property type="entry name" value="Flu_NP"/>
</dbReference>
<dbReference type="Pfam" id="PF00506">
    <property type="entry name" value="Flu_NP"/>
    <property type="match status" value="1"/>
</dbReference>
<dbReference type="SUPFAM" id="SSF161003">
    <property type="entry name" value="flu NP-like"/>
    <property type="match status" value="1"/>
</dbReference>
<proteinExistence type="inferred from homology"/>
<comment type="function">
    <text evidence="1">Encapsidates the negative strand viral RNA, protecting it from nucleases. The encapsidated genomic RNA is termed the ribonucleoprotein (RNP) and serves as template for transcription and replication. The RNP needs to be localized in the host nucleus to start an infectious cycle, but is too large to diffuse through the nuclear pore complex. NP comprises at least 2 nuclear localization signals that are responsible for the active RNP import into the nucleus through cellular importin alpha/beta pathway. Later in the infection, nclear export of RNPs are mediated through viral proteins NEP interacting with M1 which binds nucleoproteins. It is possible that nucleoprotein binds directly host exportin-1/XPO1 and plays an active role in RNPs nuclear export. M1 interaction with RNP seems to hide nucleoprotein's nuclear localization signals. Soon after a virion infects a new cell, M1 dissociates from the RNP under acidification of the virion driven by M2 protein. Dissociation of M1 from RNP unmasks nucleoprotein's nuclear localization signals, targeting the RNP to the nucleus.</text>
</comment>
<comment type="subunit">
    <text evidence="1">Homomultimerizes to form the nucleocapsid. May bind host exportin-1/XPO1. Binds to viral genomic RNA. Protein-RNA contacts are mediated by a combination of electrostatic interactions between positively charged residues and the phosphate backbone and planar interactions between aromatic side chains and bases.</text>
</comment>
<comment type="subcellular location">
    <subcellularLocation>
        <location evidence="1">Virion</location>
    </subcellularLocation>
    <subcellularLocation>
        <location evidence="1">Host nucleus</location>
    </subcellularLocation>
</comment>
<comment type="PTM">
    <text evidence="1">Late in virus-infected cells, may be cleaved from a 56-kDa protein to a 53-kDa protein by a cellular caspase. This cleavage might be a marker for the onset of apoptosis in infected cells or have a specific function in virus host interaction.</text>
</comment>
<comment type="similarity">
    <text evidence="1">Belongs to the influenza viruses nucleoprotein family.</text>
</comment>
<protein>
    <recommendedName>
        <fullName evidence="1">Nucleoprotein</fullName>
    </recommendedName>
    <alternativeName>
        <fullName evidence="1">Nucleocapsid protein</fullName>
        <shortName evidence="1">Protein N</shortName>
    </alternativeName>
</protein>
<sequence length="498" mass="56072">MASQGTKRSYEQMETGGERQNATEIRASVGRMVGGIGRFYIQMCTELKLSDNEGRLIQNSITIERMVLSAFDERRNRYLEEHPSAGRDPKKTGGPIYRRREGKWVRELVLYDKEEIRRIWRQANNGEDATAGLTHLMIWHSNLNDATYQRTRALVRTGMDPRMCSLMQGSTLPRRSGAAGAAVKGVGTMVMELIRMIKRGVNDRNFWRGENGRRTRIAYERMCNILKGKFQTAAQRAMMDQVRESRSPGNAEIEDLIFLARSALILRGAVAHKSCLPACVHGLAVASGYDFEREGYSLVGIDPFRLLQNSQVFSLIRPNENPAHKSQLVWMACHSAAFEDLRVSSFIRGARVLPRGQLSTRGVQIASNENMETMSSSTLELRSKYWAIRTRSGGNTNQQRASAGQISVQPTFSVQRNLPFERATIMAAFTGNAEGRTSDMRTEIIRMMENARPEDVSFQGRGVFELSDEKATNPIVPSFDMSKEGSYFFGDNAEEFDS</sequence>
<keyword id="KW-0167">Capsid protein</keyword>
<keyword id="KW-1139">Helical capsid protein</keyword>
<keyword id="KW-1048">Host nucleus</keyword>
<keyword id="KW-0945">Host-virus interaction</keyword>
<keyword id="KW-0687">Ribonucleoprotein</keyword>
<keyword id="KW-0694">RNA-binding</keyword>
<keyword id="KW-0543">Viral nucleoprotein</keyword>
<keyword id="KW-1163">Viral penetration into host nucleus</keyword>
<keyword id="KW-0946">Virion</keyword>
<keyword id="KW-1160">Virus entry into host cell</keyword>
<evidence type="ECO:0000255" key="1">
    <source>
        <dbReference type="HAMAP-Rule" id="MF_04070"/>
    </source>
</evidence>
<evidence type="ECO:0000256" key="2">
    <source>
        <dbReference type="SAM" id="MobiDB-lite"/>
    </source>
</evidence>
<organismHost>
    <name type="scientific">Aves</name>
    <dbReference type="NCBI Taxonomy" id="8782"/>
</organismHost>
<reference key="1">
    <citation type="journal article" date="1990" name="J. Virol.">
        <title>Evolution of the nucleoprotein gene of influenza A virus.</title>
        <authorList>
            <person name="Gorman O.T."/>
            <person name="Bean W.J."/>
            <person name="Kawaoka Y."/>
            <person name="Webster R.G."/>
        </authorList>
    </citation>
    <scope>NUCLEOTIDE SEQUENCE [GENOMIC RNA]</scope>
</reference>
<feature type="chain" id="PRO_0000079056" description="Nucleoprotein">
    <location>
        <begin position="1"/>
        <end position="498"/>
    </location>
</feature>
<feature type="region of interest" description="Disordered" evidence="2">
    <location>
        <begin position="1"/>
        <end position="21"/>
    </location>
</feature>
<feature type="short sequence motif" description="Unconventional nuclear localization signal" evidence="1">
    <location>
        <begin position="1"/>
        <end position="18"/>
    </location>
</feature>
<feature type="short sequence motif" description="Bipartite nuclear localization signal" evidence="1">
    <location>
        <begin position="198"/>
        <end position="216"/>
    </location>
</feature>
<accession>P15668</accession>